<gene>
    <name evidence="3" type="primary">LFG1</name>
    <name evidence="5" type="ordered locus">At4g14730</name>
    <name evidence="6" type="ORF">Dl3405W</name>
    <name evidence="7" type="ORF">FCAALL.300</name>
</gene>
<comment type="function">
    <text evidence="2">(Microbial infection) Facilitates the development of the powdery mildew fungus E.cruciferarum.</text>
</comment>
<comment type="function">
    <text evidence="2">(Microbial infection) May prevent cell death upon A.alternata f.sp. lycopersici (AAL) toxin treatment.</text>
</comment>
<comment type="subcellular location">
    <subcellularLocation>
        <location evidence="1">Membrane</location>
        <topology evidence="1">Multi-pass membrane protein</topology>
    </subcellularLocation>
</comment>
<comment type="alternative products">
    <event type="alternative splicing"/>
    <isoform>
        <id>F4JIE8-1</id>
        <name>1</name>
        <sequence type="displayed"/>
    </isoform>
    <isoform>
        <id>F4JIE8-2</id>
        <name>2</name>
        <sequence type="described" ref="VSP_059076 VSP_059077"/>
    </isoform>
</comment>
<comment type="tissue specificity">
    <text evidence="2">Expressed at very low in leaves.</text>
</comment>
<comment type="disruption phenotype">
    <text evidence="2">Delayed development of the powdery mildew fungus E.cruciferarum. Increased cell death upon A.alternata f.sp. lycopersici (AAL) toxin treatment.</text>
</comment>
<comment type="similarity">
    <text evidence="4">Belongs to the BI1 family.</text>
</comment>
<sequence length="235" mass="26272">MAKSDIETGGGNELYPGMKESSELRWAFIRKLYSILSLQLLVTVGVSAVVYFVRPIPEFITETHRGLAVFFVILLLPLLLLWPLLAFEKKHPINCIVLSIFTLSISFSVGICCSLSQGRIVLEAAILTAVMVFGLTIYTFWAVKRGHDFSFLGPFLFGALLIILVFTLLQIFHPLGKLSSMIFSGIASIVFCGYIIFDTNQLIKKLNYDEYITAAIRLYLDVMNLFLSLLGIISN</sequence>
<proteinExistence type="evidence at transcript level"/>
<accession>F4JIE8</accession>
<accession>O23329</accession>
<reference key="1">
    <citation type="journal article" date="1998" name="Nature">
        <title>Analysis of 1.9 Mb of contiguous sequence from chromosome 4 of Arabidopsis thaliana.</title>
        <authorList>
            <person name="Bevan M."/>
            <person name="Bancroft I."/>
            <person name="Bent E."/>
            <person name="Love K."/>
            <person name="Goodman H.M."/>
            <person name="Dean C."/>
            <person name="Bergkamp R."/>
            <person name="Dirkse W."/>
            <person name="van Staveren M."/>
            <person name="Stiekema W."/>
            <person name="Drost L."/>
            <person name="Ridley P."/>
            <person name="Hudson S.-A."/>
            <person name="Patel K."/>
            <person name="Murphy G."/>
            <person name="Piffanelli P."/>
            <person name="Wedler H."/>
            <person name="Wedler E."/>
            <person name="Wambutt R."/>
            <person name="Weitzenegger T."/>
            <person name="Pohl T."/>
            <person name="Terryn N."/>
            <person name="Gielen J."/>
            <person name="Villarroel R."/>
            <person name="De Clercq R."/>
            <person name="van Montagu M."/>
            <person name="Lecharny A."/>
            <person name="Aubourg S."/>
            <person name="Gy I."/>
            <person name="Kreis M."/>
            <person name="Lao N."/>
            <person name="Kavanagh T."/>
            <person name="Hempel S."/>
            <person name="Kotter P."/>
            <person name="Entian K.-D."/>
            <person name="Rieger M."/>
            <person name="Schaefer M."/>
            <person name="Funk B."/>
            <person name="Mueller-Auer S."/>
            <person name="Silvey M."/>
            <person name="James R."/>
            <person name="Monfort A."/>
            <person name="Pons A."/>
            <person name="Puigdomenech P."/>
            <person name="Douka A."/>
            <person name="Voukelatou E."/>
            <person name="Milioni D."/>
            <person name="Hatzopoulos P."/>
            <person name="Piravandi E."/>
            <person name="Obermaier B."/>
            <person name="Hilbert H."/>
            <person name="Duesterhoeft A."/>
            <person name="Moores T."/>
            <person name="Jones J.D.G."/>
            <person name="Eneva T."/>
            <person name="Palme K."/>
            <person name="Benes V."/>
            <person name="Rechmann S."/>
            <person name="Ansorge W."/>
            <person name="Cooke R."/>
            <person name="Berger C."/>
            <person name="Delseny M."/>
            <person name="Voet M."/>
            <person name="Volckaert G."/>
            <person name="Mewes H.-W."/>
            <person name="Klosterman S."/>
            <person name="Schueller C."/>
            <person name="Chalwatzis N."/>
        </authorList>
    </citation>
    <scope>NUCLEOTIDE SEQUENCE [LARGE SCALE GENOMIC DNA]</scope>
    <source>
        <strain>cv. Columbia</strain>
    </source>
</reference>
<reference key="2">
    <citation type="journal article" date="1999" name="Nature">
        <title>Sequence and analysis of chromosome 4 of the plant Arabidopsis thaliana.</title>
        <authorList>
            <person name="Mayer K.F.X."/>
            <person name="Schueller C."/>
            <person name="Wambutt R."/>
            <person name="Murphy G."/>
            <person name="Volckaert G."/>
            <person name="Pohl T."/>
            <person name="Duesterhoeft A."/>
            <person name="Stiekema W."/>
            <person name="Entian K.-D."/>
            <person name="Terryn N."/>
            <person name="Harris B."/>
            <person name="Ansorge W."/>
            <person name="Brandt P."/>
            <person name="Grivell L.A."/>
            <person name="Rieger M."/>
            <person name="Weichselgartner M."/>
            <person name="de Simone V."/>
            <person name="Obermaier B."/>
            <person name="Mache R."/>
            <person name="Mueller M."/>
            <person name="Kreis M."/>
            <person name="Delseny M."/>
            <person name="Puigdomenech P."/>
            <person name="Watson M."/>
            <person name="Schmidtheini T."/>
            <person name="Reichert B."/>
            <person name="Portetelle D."/>
            <person name="Perez-Alonso M."/>
            <person name="Boutry M."/>
            <person name="Bancroft I."/>
            <person name="Vos P."/>
            <person name="Hoheisel J."/>
            <person name="Zimmermann W."/>
            <person name="Wedler H."/>
            <person name="Ridley P."/>
            <person name="Langham S.-A."/>
            <person name="McCullagh B."/>
            <person name="Bilham L."/>
            <person name="Robben J."/>
            <person name="van der Schueren J."/>
            <person name="Grymonprez B."/>
            <person name="Chuang Y.-J."/>
            <person name="Vandenbussche F."/>
            <person name="Braeken M."/>
            <person name="Weltjens I."/>
            <person name="Voet M."/>
            <person name="Bastiaens I."/>
            <person name="Aert R."/>
            <person name="Defoor E."/>
            <person name="Weitzenegger T."/>
            <person name="Bothe G."/>
            <person name="Ramsperger U."/>
            <person name="Hilbert H."/>
            <person name="Braun M."/>
            <person name="Holzer E."/>
            <person name="Brandt A."/>
            <person name="Peters S."/>
            <person name="van Staveren M."/>
            <person name="Dirkse W."/>
            <person name="Mooijman P."/>
            <person name="Klein Lankhorst R."/>
            <person name="Rose M."/>
            <person name="Hauf J."/>
            <person name="Koetter P."/>
            <person name="Berneiser S."/>
            <person name="Hempel S."/>
            <person name="Feldpausch M."/>
            <person name="Lamberth S."/>
            <person name="Van den Daele H."/>
            <person name="De Keyser A."/>
            <person name="Buysshaert C."/>
            <person name="Gielen J."/>
            <person name="Villarroel R."/>
            <person name="De Clercq R."/>
            <person name="van Montagu M."/>
            <person name="Rogers J."/>
            <person name="Cronin A."/>
            <person name="Quail M.A."/>
            <person name="Bray-Allen S."/>
            <person name="Clark L."/>
            <person name="Doggett J."/>
            <person name="Hall S."/>
            <person name="Kay M."/>
            <person name="Lennard N."/>
            <person name="McLay K."/>
            <person name="Mayes R."/>
            <person name="Pettett A."/>
            <person name="Rajandream M.A."/>
            <person name="Lyne M."/>
            <person name="Benes V."/>
            <person name="Rechmann S."/>
            <person name="Borkova D."/>
            <person name="Bloecker H."/>
            <person name="Scharfe M."/>
            <person name="Grimm M."/>
            <person name="Loehnert T.-H."/>
            <person name="Dose S."/>
            <person name="de Haan M."/>
            <person name="Maarse A.C."/>
            <person name="Schaefer M."/>
            <person name="Mueller-Auer S."/>
            <person name="Gabel C."/>
            <person name="Fuchs M."/>
            <person name="Fartmann B."/>
            <person name="Granderath K."/>
            <person name="Dauner D."/>
            <person name="Herzl A."/>
            <person name="Neumann S."/>
            <person name="Argiriou A."/>
            <person name="Vitale D."/>
            <person name="Liguori R."/>
            <person name="Piravandi E."/>
            <person name="Massenet O."/>
            <person name="Quigley F."/>
            <person name="Clabauld G."/>
            <person name="Muendlein A."/>
            <person name="Felber R."/>
            <person name="Schnabl S."/>
            <person name="Hiller R."/>
            <person name="Schmidt W."/>
            <person name="Lecharny A."/>
            <person name="Aubourg S."/>
            <person name="Chefdor F."/>
            <person name="Cooke R."/>
            <person name="Berger C."/>
            <person name="Monfort A."/>
            <person name="Casacuberta E."/>
            <person name="Gibbons T."/>
            <person name="Weber N."/>
            <person name="Vandenbol M."/>
            <person name="Bargues M."/>
            <person name="Terol J."/>
            <person name="Torres A."/>
            <person name="Perez-Perez A."/>
            <person name="Purnelle B."/>
            <person name="Bent E."/>
            <person name="Johnson S."/>
            <person name="Tacon D."/>
            <person name="Jesse T."/>
            <person name="Heijnen L."/>
            <person name="Schwarz S."/>
            <person name="Scholler P."/>
            <person name="Heber S."/>
            <person name="Francs P."/>
            <person name="Bielke C."/>
            <person name="Frishman D."/>
            <person name="Haase D."/>
            <person name="Lemcke K."/>
            <person name="Mewes H.-W."/>
            <person name="Stocker S."/>
            <person name="Zaccaria P."/>
            <person name="Bevan M."/>
            <person name="Wilson R.K."/>
            <person name="de la Bastide M."/>
            <person name="Habermann K."/>
            <person name="Parnell L."/>
            <person name="Dedhia N."/>
            <person name="Gnoj L."/>
            <person name="Schutz K."/>
            <person name="Huang E."/>
            <person name="Spiegel L."/>
            <person name="Sekhon M."/>
            <person name="Murray J."/>
            <person name="Sheet P."/>
            <person name="Cordes M."/>
            <person name="Abu-Threideh J."/>
            <person name="Stoneking T."/>
            <person name="Kalicki J."/>
            <person name="Graves T."/>
            <person name="Harmon G."/>
            <person name="Edwards J."/>
            <person name="Latreille P."/>
            <person name="Courtney L."/>
            <person name="Cloud J."/>
            <person name="Abbott A."/>
            <person name="Scott K."/>
            <person name="Johnson D."/>
            <person name="Minx P."/>
            <person name="Bentley D."/>
            <person name="Fulton B."/>
            <person name="Miller N."/>
            <person name="Greco T."/>
            <person name="Kemp K."/>
            <person name="Kramer J."/>
            <person name="Fulton L."/>
            <person name="Mardis E."/>
            <person name="Dante M."/>
            <person name="Pepin K."/>
            <person name="Hillier L.W."/>
            <person name="Nelson J."/>
            <person name="Spieth J."/>
            <person name="Ryan E."/>
            <person name="Andrews S."/>
            <person name="Geisel C."/>
            <person name="Layman D."/>
            <person name="Du H."/>
            <person name="Ali J."/>
            <person name="Berghoff A."/>
            <person name="Jones K."/>
            <person name="Drone K."/>
            <person name="Cotton M."/>
            <person name="Joshu C."/>
            <person name="Antonoiu B."/>
            <person name="Zidanic M."/>
            <person name="Strong C."/>
            <person name="Sun H."/>
            <person name="Lamar B."/>
            <person name="Yordan C."/>
            <person name="Ma P."/>
            <person name="Zhong J."/>
            <person name="Preston R."/>
            <person name="Vil D."/>
            <person name="Shekher M."/>
            <person name="Matero A."/>
            <person name="Shah R."/>
            <person name="Swaby I.K."/>
            <person name="O'Shaughnessy A."/>
            <person name="Rodriguez M."/>
            <person name="Hoffman J."/>
            <person name="Till S."/>
            <person name="Granat S."/>
            <person name="Shohdy N."/>
            <person name="Hasegawa A."/>
            <person name="Hameed A."/>
            <person name="Lodhi M."/>
            <person name="Johnson A."/>
            <person name="Chen E."/>
            <person name="Marra M.A."/>
            <person name="Martienssen R."/>
            <person name="McCombie W.R."/>
        </authorList>
    </citation>
    <scope>NUCLEOTIDE SEQUENCE [LARGE SCALE GENOMIC DNA]</scope>
    <source>
        <strain>cv. Columbia</strain>
    </source>
</reference>
<reference key="3">
    <citation type="journal article" date="2017" name="Plant J.">
        <title>Araport11: a complete reannotation of the Arabidopsis thaliana reference genome.</title>
        <authorList>
            <person name="Cheng C.Y."/>
            <person name="Krishnakumar V."/>
            <person name="Chan A.P."/>
            <person name="Thibaud-Nissen F."/>
            <person name="Schobel S."/>
            <person name="Town C.D."/>
        </authorList>
    </citation>
    <scope>GENOME REANNOTATION</scope>
    <source>
        <strain>cv. Columbia</strain>
    </source>
</reference>
<reference key="4">
    <citation type="submission" date="2004-01" db="EMBL/GenBank/DDBJ databases">
        <title>Arabidopsis ORF clones.</title>
        <authorList>
            <person name="Cheuk R.F."/>
            <person name="Chen H."/>
            <person name="Kim C.J."/>
            <person name="Shinn P."/>
            <person name="Ecker J.R."/>
        </authorList>
    </citation>
    <scope>NUCLEOTIDE SEQUENCE [LARGE SCALE MRNA] (ISOFORM 2)</scope>
    <source>
        <strain>cv. Columbia</strain>
    </source>
</reference>
<reference key="5">
    <citation type="journal article" date="2009" name="Biosci. Biotechnol. Biochem.">
        <title>Chemical genetics reveal the novel transmembrane protein BIL4, which mediates plant cell elongation in brassinosteroid signaling.</title>
        <authorList>
            <person name="Yamagami A."/>
            <person name="Nakazawa M."/>
            <person name="Matsui M."/>
            <person name="Tujimoto M."/>
            <person name="Sakuta M."/>
            <person name="Asami T."/>
            <person name="Nakano T."/>
        </authorList>
    </citation>
    <scope>GENE FAMILY</scope>
</reference>
<reference key="6">
    <citation type="journal article" date="2013" name="J. Exp. Bot.">
        <title>LIFEGUARD proteins support plant colonization by biotrophic powdery mildew fungi.</title>
        <authorList>
            <person name="Weis C."/>
            <person name="Hueckelhoven R."/>
            <person name="Eichmann R."/>
        </authorList>
    </citation>
    <scope>FUNCTION (MICROBIAL INFECTION)</scope>
    <scope>DISRUPTION PHENOTYPE</scope>
    <scope>TISSUE SPECIFICITY</scope>
    <scope>GENE FAMILY</scope>
    <scope>NOMENCLATURE</scope>
    <source>
        <strain>cv. Columbia</strain>
    </source>
</reference>
<feature type="chain" id="PRO_0000441629" description="Protein LIFEGUARD 1">
    <location>
        <begin position="1"/>
        <end position="235"/>
    </location>
</feature>
<feature type="transmembrane region" description="Helical" evidence="1">
    <location>
        <begin position="33"/>
        <end position="53"/>
    </location>
</feature>
<feature type="transmembrane region" description="Helical" evidence="1">
    <location>
        <begin position="67"/>
        <end position="87"/>
    </location>
</feature>
<feature type="transmembrane region" description="Helical" evidence="1">
    <location>
        <begin position="95"/>
        <end position="115"/>
    </location>
</feature>
<feature type="transmembrane region" description="Helical" evidence="1">
    <location>
        <begin position="120"/>
        <end position="140"/>
    </location>
</feature>
<feature type="transmembrane region" description="Helical" evidence="1">
    <location>
        <begin position="149"/>
        <end position="169"/>
    </location>
</feature>
<feature type="transmembrane region" description="Helical" evidence="1">
    <location>
        <begin position="178"/>
        <end position="198"/>
    </location>
</feature>
<feature type="transmembrane region" description="Helical" evidence="1">
    <location>
        <begin position="212"/>
        <end position="232"/>
    </location>
</feature>
<feature type="splice variant" id="VSP_059076" description="In isoform 2.">
    <original>LLWPLLAFEKKHPINCIVLSI</original>
    <variation>RYVSFHILLFIHSFLGSIIVA</variation>
    <location>
        <begin position="80"/>
        <end position="100"/>
    </location>
</feature>
<feature type="splice variant" id="VSP_059077" description="In isoform 2.">
    <location>
        <begin position="101"/>
        <end position="235"/>
    </location>
</feature>
<protein>
    <recommendedName>
        <fullName evidence="3">Protein LIFEGUARD 1</fullName>
        <shortName evidence="3">AtLFG1</shortName>
    </recommendedName>
</protein>
<name>LFG1_ARATH</name>
<evidence type="ECO:0000255" key="1"/>
<evidence type="ECO:0000269" key="2">
    <source>
    </source>
</evidence>
<evidence type="ECO:0000303" key="3">
    <source>
    </source>
</evidence>
<evidence type="ECO:0000305" key="4"/>
<evidence type="ECO:0000312" key="5">
    <source>
        <dbReference type="Araport" id="AT4G14730"/>
    </source>
</evidence>
<evidence type="ECO:0000312" key="6">
    <source>
        <dbReference type="EMBL" id="CAB10252.1"/>
    </source>
</evidence>
<evidence type="ECO:0000312" key="7">
    <source>
        <dbReference type="EMBL" id="CAB78515.1"/>
    </source>
</evidence>
<keyword id="KW-0025">Alternative splicing</keyword>
<keyword id="KW-0472">Membrane</keyword>
<keyword id="KW-0611">Plant defense</keyword>
<keyword id="KW-1185">Reference proteome</keyword>
<keyword id="KW-0812">Transmembrane</keyword>
<keyword id="KW-1133">Transmembrane helix</keyword>
<organism>
    <name type="scientific">Arabidopsis thaliana</name>
    <name type="common">Mouse-ear cress</name>
    <dbReference type="NCBI Taxonomy" id="3702"/>
    <lineage>
        <taxon>Eukaryota</taxon>
        <taxon>Viridiplantae</taxon>
        <taxon>Streptophyta</taxon>
        <taxon>Embryophyta</taxon>
        <taxon>Tracheophyta</taxon>
        <taxon>Spermatophyta</taxon>
        <taxon>Magnoliopsida</taxon>
        <taxon>eudicotyledons</taxon>
        <taxon>Gunneridae</taxon>
        <taxon>Pentapetalae</taxon>
        <taxon>rosids</taxon>
        <taxon>malvids</taxon>
        <taxon>Brassicales</taxon>
        <taxon>Brassicaceae</taxon>
        <taxon>Camelineae</taxon>
        <taxon>Arabidopsis</taxon>
    </lineage>
</organism>
<dbReference type="EMBL" id="Z97337">
    <property type="protein sequence ID" value="CAB10252.1"/>
    <property type="molecule type" value="Genomic_DNA"/>
</dbReference>
<dbReference type="EMBL" id="AL161539">
    <property type="protein sequence ID" value="CAB78515.1"/>
    <property type="molecule type" value="Genomic_DNA"/>
</dbReference>
<dbReference type="EMBL" id="CP002687">
    <property type="protein sequence ID" value="AEE83489.1"/>
    <property type="molecule type" value="Genomic_DNA"/>
</dbReference>
<dbReference type="EMBL" id="BT010801">
    <property type="protein sequence ID" value="AAR24168.1"/>
    <property type="molecule type" value="mRNA"/>
</dbReference>
<dbReference type="EMBL" id="BT011269">
    <property type="protein sequence ID" value="AAR92305.1"/>
    <property type="molecule type" value="mRNA"/>
</dbReference>
<dbReference type="PIR" id="B71410">
    <property type="entry name" value="B71410"/>
</dbReference>
<dbReference type="RefSeq" id="NP_193209.2">
    <molecule id="F4JIE8-1"/>
    <property type="nucleotide sequence ID" value="NM_117558.3"/>
</dbReference>
<dbReference type="SMR" id="F4JIE8"/>
<dbReference type="FunCoup" id="F4JIE8">
    <property type="interactions" value="2986"/>
</dbReference>
<dbReference type="IntAct" id="F4JIE8">
    <property type="interactions" value="4"/>
</dbReference>
<dbReference type="STRING" id="3702.F4JIE8"/>
<dbReference type="iPTMnet" id="F4JIE8"/>
<dbReference type="PaxDb" id="3702-AT4G14730.1"/>
<dbReference type="ProteomicsDB" id="238464">
    <molecule id="F4JIE8-1"/>
</dbReference>
<dbReference type="EnsemblPlants" id="AT4G14730.1">
    <molecule id="F4JIE8-1"/>
    <property type="protein sequence ID" value="AT4G14730.1"/>
    <property type="gene ID" value="AT4G14730"/>
</dbReference>
<dbReference type="GeneID" id="827126"/>
<dbReference type="Gramene" id="AT4G14730.1">
    <molecule id="F4JIE8-1"/>
    <property type="protein sequence ID" value="AT4G14730.1"/>
    <property type="gene ID" value="AT4G14730"/>
</dbReference>
<dbReference type="KEGG" id="ath:AT4G14730"/>
<dbReference type="Araport" id="AT4G14730"/>
<dbReference type="TAIR" id="AT4G14730">
    <property type="gene designation" value="LFG1"/>
</dbReference>
<dbReference type="eggNOG" id="KOG2322">
    <property type="taxonomic scope" value="Eukaryota"/>
</dbReference>
<dbReference type="HOGENOM" id="CLU_058671_0_1_1"/>
<dbReference type="InParanoid" id="F4JIE8"/>
<dbReference type="OMA" id="HPINCIV"/>
<dbReference type="PRO" id="PR:F4JIE8"/>
<dbReference type="Proteomes" id="UP000006548">
    <property type="component" value="Chromosome 4"/>
</dbReference>
<dbReference type="ExpressionAtlas" id="F4JIE8">
    <property type="expression patterns" value="baseline and differential"/>
</dbReference>
<dbReference type="GO" id="GO:0016020">
    <property type="term" value="C:membrane"/>
    <property type="evidence" value="ECO:0007669"/>
    <property type="project" value="UniProtKB-SubCell"/>
</dbReference>
<dbReference type="GO" id="GO:0034620">
    <property type="term" value="P:cellular response to unfolded protein"/>
    <property type="evidence" value="ECO:0000315"/>
    <property type="project" value="TAIR"/>
</dbReference>
<dbReference type="GO" id="GO:0006952">
    <property type="term" value="P:defense response"/>
    <property type="evidence" value="ECO:0007669"/>
    <property type="project" value="UniProtKB-KW"/>
</dbReference>
<dbReference type="InterPro" id="IPR006214">
    <property type="entry name" value="Bax_inhibitor_1-related"/>
</dbReference>
<dbReference type="PANTHER" id="PTHR23291">
    <property type="entry name" value="BAX INHIBITOR-RELATED"/>
    <property type="match status" value="1"/>
</dbReference>
<dbReference type="PANTHER" id="PTHR23291:SF123">
    <property type="entry name" value="PROTEIN LIFEGUARD 1"/>
    <property type="match status" value="1"/>
</dbReference>
<dbReference type="Pfam" id="PF01027">
    <property type="entry name" value="Bax1-I"/>
    <property type="match status" value="1"/>
</dbReference>